<protein>
    <recommendedName>
        <fullName evidence="1">Methionyl-tRNA formyltransferase</fullName>
        <ecNumber evidence="1">2.1.2.9</ecNumber>
    </recommendedName>
</protein>
<evidence type="ECO:0000255" key="1">
    <source>
        <dbReference type="HAMAP-Rule" id="MF_00182"/>
    </source>
</evidence>
<accession>B7JJV3</accession>
<feature type="chain" id="PRO_1000118468" description="Methionyl-tRNA formyltransferase">
    <location>
        <begin position="1"/>
        <end position="314"/>
    </location>
</feature>
<feature type="binding site" evidence="1">
    <location>
        <begin position="110"/>
        <end position="113"/>
    </location>
    <ligand>
        <name>(6S)-5,6,7,8-tetrahydrofolate</name>
        <dbReference type="ChEBI" id="CHEBI:57453"/>
    </ligand>
</feature>
<comment type="function">
    <text evidence="1">Attaches a formyl group to the free amino group of methionyl-tRNA(fMet). The formyl group appears to play a dual role in the initiator identity of N-formylmethionyl-tRNA by promoting its recognition by IF2 and preventing the misappropriation of this tRNA by the elongation apparatus.</text>
</comment>
<comment type="catalytic activity">
    <reaction evidence="1">
        <text>L-methionyl-tRNA(fMet) + (6R)-10-formyltetrahydrofolate = N-formyl-L-methionyl-tRNA(fMet) + (6S)-5,6,7,8-tetrahydrofolate + H(+)</text>
        <dbReference type="Rhea" id="RHEA:24380"/>
        <dbReference type="Rhea" id="RHEA-COMP:9952"/>
        <dbReference type="Rhea" id="RHEA-COMP:9953"/>
        <dbReference type="ChEBI" id="CHEBI:15378"/>
        <dbReference type="ChEBI" id="CHEBI:57453"/>
        <dbReference type="ChEBI" id="CHEBI:78530"/>
        <dbReference type="ChEBI" id="CHEBI:78844"/>
        <dbReference type="ChEBI" id="CHEBI:195366"/>
        <dbReference type="EC" id="2.1.2.9"/>
    </reaction>
</comment>
<comment type="similarity">
    <text evidence="1">Belongs to the Fmt family.</text>
</comment>
<keyword id="KW-0648">Protein biosynthesis</keyword>
<keyword id="KW-0808">Transferase</keyword>
<sequence length="314" mass="34736">MIKVVFMGTPDFSVPVLRRLIEDGYDVIGVVTQPDRPVGRKKVLTPTPVKVEAEKHGIPVLQPLRIREKDEYEKVLALEPDLIVTAAFGQIVPNEILEAPKYGCINVHASLLPELRGGAPIHYAIMEGKEKTGITIMYMVEKLDAGDILTQVEVEIEERETTGSLFDKLSEAGAHLLSKTVPLLIQGKLEPIKQNEEEVTFAYNIKREQEKIDWTKTGEEVYNHIRGLNPWPVAYTTLAGQVVKVWWGEKVPVTKSAEAGTIVAIEEDGFVVATGNETGVKITELQPSGKKRMSCSQFLRGTKPEIGTKLGENA</sequence>
<gene>
    <name evidence="1" type="primary">fmt</name>
    <name type="ordered locus">BCAH820_3880</name>
</gene>
<name>FMT_BACC0</name>
<reference key="1">
    <citation type="submission" date="2008-10" db="EMBL/GenBank/DDBJ databases">
        <title>Genome sequence of Bacillus cereus AH820.</title>
        <authorList>
            <person name="Dodson R.J."/>
            <person name="Durkin A.S."/>
            <person name="Rosovitz M.J."/>
            <person name="Rasko D.A."/>
            <person name="Hoffmaster A."/>
            <person name="Ravel J."/>
            <person name="Sutton G."/>
        </authorList>
    </citation>
    <scope>NUCLEOTIDE SEQUENCE [LARGE SCALE GENOMIC DNA]</scope>
    <source>
        <strain>AH820</strain>
    </source>
</reference>
<proteinExistence type="inferred from homology"/>
<dbReference type="EC" id="2.1.2.9" evidence="1"/>
<dbReference type="EMBL" id="CP001283">
    <property type="protein sequence ID" value="ACK91986.1"/>
    <property type="molecule type" value="Genomic_DNA"/>
</dbReference>
<dbReference type="RefSeq" id="WP_000598790.1">
    <property type="nucleotide sequence ID" value="NC_011773.1"/>
</dbReference>
<dbReference type="SMR" id="B7JJV3"/>
<dbReference type="GeneID" id="45023695"/>
<dbReference type="KEGG" id="bcu:BCAH820_3880"/>
<dbReference type="HOGENOM" id="CLU_033347_1_1_9"/>
<dbReference type="Proteomes" id="UP000001363">
    <property type="component" value="Chromosome"/>
</dbReference>
<dbReference type="GO" id="GO:0005829">
    <property type="term" value="C:cytosol"/>
    <property type="evidence" value="ECO:0007669"/>
    <property type="project" value="TreeGrafter"/>
</dbReference>
<dbReference type="GO" id="GO:0004479">
    <property type="term" value="F:methionyl-tRNA formyltransferase activity"/>
    <property type="evidence" value="ECO:0007669"/>
    <property type="project" value="UniProtKB-UniRule"/>
</dbReference>
<dbReference type="CDD" id="cd08646">
    <property type="entry name" value="FMT_core_Met-tRNA-FMT_N"/>
    <property type="match status" value="1"/>
</dbReference>
<dbReference type="CDD" id="cd08704">
    <property type="entry name" value="Met_tRNA_FMT_C"/>
    <property type="match status" value="1"/>
</dbReference>
<dbReference type="FunFam" id="3.10.25.10:FF:000003">
    <property type="entry name" value="Methionyl-tRNA formyltransferase"/>
    <property type="match status" value="1"/>
</dbReference>
<dbReference type="FunFam" id="3.40.50.170:FF:000004">
    <property type="entry name" value="Methionyl-tRNA formyltransferase"/>
    <property type="match status" value="1"/>
</dbReference>
<dbReference type="Gene3D" id="3.10.25.10">
    <property type="entry name" value="Formyl transferase, C-terminal domain"/>
    <property type="match status" value="1"/>
</dbReference>
<dbReference type="Gene3D" id="3.40.50.170">
    <property type="entry name" value="Formyl transferase, N-terminal domain"/>
    <property type="match status" value="1"/>
</dbReference>
<dbReference type="HAMAP" id="MF_00182">
    <property type="entry name" value="Formyl_trans"/>
    <property type="match status" value="1"/>
</dbReference>
<dbReference type="InterPro" id="IPR005794">
    <property type="entry name" value="Fmt"/>
</dbReference>
<dbReference type="InterPro" id="IPR005793">
    <property type="entry name" value="Formyl_trans_C"/>
</dbReference>
<dbReference type="InterPro" id="IPR037022">
    <property type="entry name" value="Formyl_trans_C_sf"/>
</dbReference>
<dbReference type="InterPro" id="IPR002376">
    <property type="entry name" value="Formyl_transf_N"/>
</dbReference>
<dbReference type="InterPro" id="IPR036477">
    <property type="entry name" value="Formyl_transf_N_sf"/>
</dbReference>
<dbReference type="InterPro" id="IPR011034">
    <property type="entry name" value="Formyl_transferase-like_C_sf"/>
</dbReference>
<dbReference type="InterPro" id="IPR001555">
    <property type="entry name" value="GART_AS"/>
</dbReference>
<dbReference type="InterPro" id="IPR044135">
    <property type="entry name" value="Met-tRNA-FMT_C"/>
</dbReference>
<dbReference type="InterPro" id="IPR041711">
    <property type="entry name" value="Met-tRNA-FMT_N"/>
</dbReference>
<dbReference type="NCBIfam" id="TIGR00460">
    <property type="entry name" value="fmt"/>
    <property type="match status" value="1"/>
</dbReference>
<dbReference type="PANTHER" id="PTHR11138">
    <property type="entry name" value="METHIONYL-TRNA FORMYLTRANSFERASE"/>
    <property type="match status" value="1"/>
</dbReference>
<dbReference type="PANTHER" id="PTHR11138:SF5">
    <property type="entry name" value="METHIONYL-TRNA FORMYLTRANSFERASE, MITOCHONDRIAL"/>
    <property type="match status" value="1"/>
</dbReference>
<dbReference type="Pfam" id="PF02911">
    <property type="entry name" value="Formyl_trans_C"/>
    <property type="match status" value="1"/>
</dbReference>
<dbReference type="Pfam" id="PF00551">
    <property type="entry name" value="Formyl_trans_N"/>
    <property type="match status" value="1"/>
</dbReference>
<dbReference type="SUPFAM" id="SSF50486">
    <property type="entry name" value="FMT C-terminal domain-like"/>
    <property type="match status" value="1"/>
</dbReference>
<dbReference type="SUPFAM" id="SSF53328">
    <property type="entry name" value="Formyltransferase"/>
    <property type="match status" value="1"/>
</dbReference>
<dbReference type="PROSITE" id="PS00373">
    <property type="entry name" value="GART"/>
    <property type="match status" value="1"/>
</dbReference>
<organism>
    <name type="scientific">Bacillus cereus (strain AH820)</name>
    <dbReference type="NCBI Taxonomy" id="405535"/>
    <lineage>
        <taxon>Bacteria</taxon>
        <taxon>Bacillati</taxon>
        <taxon>Bacillota</taxon>
        <taxon>Bacilli</taxon>
        <taxon>Bacillales</taxon>
        <taxon>Bacillaceae</taxon>
        <taxon>Bacillus</taxon>
        <taxon>Bacillus cereus group</taxon>
    </lineage>
</organism>